<organism>
    <name type="scientific">Rhizobium etli (strain ATCC 51251 / DSM 11541 / JCM 21823 / NBRC 15573 / CFN 42)</name>
    <dbReference type="NCBI Taxonomy" id="347834"/>
    <lineage>
        <taxon>Bacteria</taxon>
        <taxon>Pseudomonadati</taxon>
        <taxon>Pseudomonadota</taxon>
        <taxon>Alphaproteobacteria</taxon>
        <taxon>Hyphomicrobiales</taxon>
        <taxon>Rhizobiaceae</taxon>
        <taxon>Rhizobium/Agrobacterium group</taxon>
        <taxon>Rhizobium</taxon>
    </lineage>
</organism>
<comment type="function">
    <text evidence="1">Together with its co-chaperonin GroES, plays an essential role in assisting protein folding. The GroEL-GroES system forms a nano-cage that allows encapsulation of the non-native substrate proteins and provides a physical environment optimized to promote and accelerate protein folding.</text>
</comment>
<comment type="catalytic activity">
    <reaction evidence="1">
        <text>ATP + H2O + a folded polypeptide = ADP + phosphate + an unfolded polypeptide.</text>
        <dbReference type="EC" id="5.6.1.7"/>
    </reaction>
</comment>
<comment type="subunit">
    <text evidence="1">Forms a cylinder of 14 subunits composed of two heptameric rings stacked back-to-back. Interacts with the co-chaperonin GroES.</text>
</comment>
<comment type="subcellular location">
    <subcellularLocation>
        <location evidence="1">Cytoplasm</location>
    </subcellularLocation>
</comment>
<comment type="similarity">
    <text evidence="1">Belongs to the chaperonin (HSP60) family.</text>
</comment>
<keyword id="KW-0067">ATP-binding</keyword>
<keyword id="KW-0143">Chaperone</keyword>
<keyword id="KW-0963">Cytoplasm</keyword>
<keyword id="KW-0413">Isomerase</keyword>
<keyword id="KW-0547">Nucleotide-binding</keyword>
<keyword id="KW-1185">Reference proteome</keyword>
<evidence type="ECO:0000255" key="1">
    <source>
        <dbReference type="HAMAP-Rule" id="MF_00600"/>
    </source>
</evidence>
<name>CH603_RHIEC</name>
<gene>
    <name evidence="1" type="primary">groEL3</name>
    <name evidence="1" type="synonym">groL3</name>
    <name type="ordered locus">RHE_CH01271</name>
</gene>
<accession>Q2KAR0</accession>
<dbReference type="EC" id="5.6.1.7" evidence="1"/>
<dbReference type="EMBL" id="CP000133">
    <property type="protein sequence ID" value="ABC90076.1"/>
    <property type="molecule type" value="Genomic_DNA"/>
</dbReference>
<dbReference type="RefSeq" id="WP_011424610.1">
    <property type="nucleotide sequence ID" value="NC_007761.1"/>
</dbReference>
<dbReference type="SMR" id="Q2KAR0"/>
<dbReference type="KEGG" id="ret:RHE_CH01271"/>
<dbReference type="eggNOG" id="COG0459">
    <property type="taxonomic scope" value="Bacteria"/>
</dbReference>
<dbReference type="HOGENOM" id="CLU_016503_3_0_5"/>
<dbReference type="OrthoDB" id="9766614at2"/>
<dbReference type="Proteomes" id="UP000001936">
    <property type="component" value="Chromosome"/>
</dbReference>
<dbReference type="GO" id="GO:0005737">
    <property type="term" value="C:cytoplasm"/>
    <property type="evidence" value="ECO:0007669"/>
    <property type="project" value="UniProtKB-SubCell"/>
</dbReference>
<dbReference type="GO" id="GO:0005524">
    <property type="term" value="F:ATP binding"/>
    <property type="evidence" value="ECO:0007669"/>
    <property type="project" value="UniProtKB-UniRule"/>
</dbReference>
<dbReference type="GO" id="GO:0140662">
    <property type="term" value="F:ATP-dependent protein folding chaperone"/>
    <property type="evidence" value="ECO:0007669"/>
    <property type="project" value="InterPro"/>
</dbReference>
<dbReference type="GO" id="GO:0016853">
    <property type="term" value="F:isomerase activity"/>
    <property type="evidence" value="ECO:0007669"/>
    <property type="project" value="UniProtKB-KW"/>
</dbReference>
<dbReference type="GO" id="GO:0051082">
    <property type="term" value="F:unfolded protein binding"/>
    <property type="evidence" value="ECO:0007669"/>
    <property type="project" value="UniProtKB-UniRule"/>
</dbReference>
<dbReference type="GO" id="GO:0042026">
    <property type="term" value="P:protein refolding"/>
    <property type="evidence" value="ECO:0007669"/>
    <property type="project" value="UniProtKB-UniRule"/>
</dbReference>
<dbReference type="CDD" id="cd03344">
    <property type="entry name" value="GroEL"/>
    <property type="match status" value="1"/>
</dbReference>
<dbReference type="FunFam" id="3.50.7.10:FF:000001">
    <property type="entry name" value="60 kDa chaperonin"/>
    <property type="match status" value="1"/>
</dbReference>
<dbReference type="Gene3D" id="3.50.7.10">
    <property type="entry name" value="GroEL"/>
    <property type="match status" value="1"/>
</dbReference>
<dbReference type="Gene3D" id="1.10.560.10">
    <property type="entry name" value="GroEL-like equatorial domain"/>
    <property type="match status" value="1"/>
</dbReference>
<dbReference type="Gene3D" id="3.30.260.10">
    <property type="entry name" value="TCP-1-like chaperonin intermediate domain"/>
    <property type="match status" value="1"/>
</dbReference>
<dbReference type="HAMAP" id="MF_00600">
    <property type="entry name" value="CH60"/>
    <property type="match status" value="1"/>
</dbReference>
<dbReference type="InterPro" id="IPR018370">
    <property type="entry name" value="Chaperonin_Cpn60_CS"/>
</dbReference>
<dbReference type="InterPro" id="IPR001844">
    <property type="entry name" value="Cpn60/GroEL"/>
</dbReference>
<dbReference type="InterPro" id="IPR002423">
    <property type="entry name" value="Cpn60/GroEL/TCP-1"/>
</dbReference>
<dbReference type="InterPro" id="IPR027409">
    <property type="entry name" value="GroEL-like_apical_dom_sf"/>
</dbReference>
<dbReference type="InterPro" id="IPR027413">
    <property type="entry name" value="GROEL-like_equatorial_sf"/>
</dbReference>
<dbReference type="InterPro" id="IPR027410">
    <property type="entry name" value="TCP-1-like_intermed_sf"/>
</dbReference>
<dbReference type="NCBIfam" id="TIGR02348">
    <property type="entry name" value="GroEL"/>
    <property type="match status" value="1"/>
</dbReference>
<dbReference type="NCBIfam" id="NF000592">
    <property type="entry name" value="PRK00013.1"/>
    <property type="match status" value="1"/>
</dbReference>
<dbReference type="NCBIfam" id="NF009487">
    <property type="entry name" value="PRK12849.1"/>
    <property type="match status" value="1"/>
</dbReference>
<dbReference type="NCBIfam" id="NF009488">
    <property type="entry name" value="PRK12850.1"/>
    <property type="match status" value="1"/>
</dbReference>
<dbReference type="NCBIfam" id="NF009489">
    <property type="entry name" value="PRK12851.1"/>
    <property type="match status" value="1"/>
</dbReference>
<dbReference type="PANTHER" id="PTHR45633">
    <property type="entry name" value="60 KDA HEAT SHOCK PROTEIN, MITOCHONDRIAL"/>
    <property type="match status" value="1"/>
</dbReference>
<dbReference type="Pfam" id="PF00118">
    <property type="entry name" value="Cpn60_TCP1"/>
    <property type="match status" value="1"/>
</dbReference>
<dbReference type="PRINTS" id="PR00298">
    <property type="entry name" value="CHAPERONIN60"/>
</dbReference>
<dbReference type="SUPFAM" id="SSF52029">
    <property type="entry name" value="GroEL apical domain-like"/>
    <property type="match status" value="1"/>
</dbReference>
<dbReference type="SUPFAM" id="SSF48592">
    <property type="entry name" value="GroEL equatorial domain-like"/>
    <property type="match status" value="1"/>
</dbReference>
<dbReference type="SUPFAM" id="SSF54849">
    <property type="entry name" value="GroEL-intermediate domain like"/>
    <property type="match status" value="1"/>
</dbReference>
<dbReference type="PROSITE" id="PS00296">
    <property type="entry name" value="CHAPERONINS_CPN60"/>
    <property type="match status" value="1"/>
</dbReference>
<reference key="1">
    <citation type="journal article" date="2006" name="Proc. Natl. Acad. Sci. U.S.A.">
        <title>The partitioned Rhizobium etli genome: genetic and metabolic redundancy in seven interacting replicons.</title>
        <authorList>
            <person name="Gonzalez V."/>
            <person name="Santamaria R.I."/>
            <person name="Bustos P."/>
            <person name="Hernandez-Gonzalez I."/>
            <person name="Medrano-Soto A."/>
            <person name="Moreno-Hagelsieb G."/>
            <person name="Janga S.C."/>
            <person name="Ramirez M.A."/>
            <person name="Jimenez-Jacinto V."/>
            <person name="Collado-Vides J."/>
            <person name="Davila G."/>
        </authorList>
    </citation>
    <scope>NUCLEOTIDE SEQUENCE [LARGE SCALE GENOMIC DNA]</scope>
    <source>
        <strain>ATCC 51251 / DSM 11541 / JCM 21823 / NBRC 15573 / CFN 42</strain>
    </source>
</reference>
<sequence length="544" mass="57575">MSAKEIKFSTDARAHLLRGVELLNNAVKVTLGPKGRNVVIDKAYGAPRITKDGVTVAREIELGNKFENMGAQMVREVASKTNDLAGDGTTTATVLAASIFREGAKLVAAGMNPMDLRRGIDLGVSAIVKEIQARARKVKSSGEIAQVGAIAANGDATVGEMIAKAMEKVGNEGVITVEEARTAETELDVVEGMQFDRGYLSPYFVTNAEKMRVELEDPYILLHEKKLGSLQALLPILEAVVQTGKPLLLISEDVEGEALATLVVNKLRGGLKVAAVKAPGFGDRRKAMLEDIAALTSGQMISEDLGIKLENVTLYMLGRAKRVLIEKDTTTIIDGTGEKAAIQARIQQMKAQIEETTSDYDKEKLQERLAKLAGGVAVIRVGGATETEVKEKKDRIEDALNATRAAVEEGIVPGGGVALLRAKSALTGMVGENADVTAGISIVLRALEAPIRQIAENAGFEGSIIVGRLTGRNDHNQGFDAQTETYVDMVEAGIVDPAKVVRTALQDAGSIAALLITAEVMIADIPARNPAPAVGNGGMGDMGY</sequence>
<feature type="chain" id="PRO_0000256960" description="Chaperonin GroEL 3">
    <location>
        <begin position="1"/>
        <end position="544"/>
    </location>
</feature>
<feature type="binding site" evidence="1">
    <location>
        <begin position="30"/>
        <end position="33"/>
    </location>
    <ligand>
        <name>ATP</name>
        <dbReference type="ChEBI" id="CHEBI:30616"/>
    </ligand>
</feature>
<feature type="binding site" evidence="1">
    <location>
        <position position="51"/>
    </location>
    <ligand>
        <name>ATP</name>
        <dbReference type="ChEBI" id="CHEBI:30616"/>
    </ligand>
</feature>
<feature type="binding site" evidence="1">
    <location>
        <begin position="87"/>
        <end position="91"/>
    </location>
    <ligand>
        <name>ATP</name>
        <dbReference type="ChEBI" id="CHEBI:30616"/>
    </ligand>
</feature>
<feature type="binding site" evidence="1">
    <location>
        <position position="415"/>
    </location>
    <ligand>
        <name>ATP</name>
        <dbReference type="ChEBI" id="CHEBI:30616"/>
    </ligand>
</feature>
<feature type="binding site" evidence="1">
    <location>
        <position position="496"/>
    </location>
    <ligand>
        <name>ATP</name>
        <dbReference type="ChEBI" id="CHEBI:30616"/>
    </ligand>
</feature>
<protein>
    <recommendedName>
        <fullName evidence="1">Chaperonin GroEL 3</fullName>
        <ecNumber evidence="1">5.6.1.7</ecNumber>
    </recommendedName>
    <alternativeName>
        <fullName evidence="1">60 kDa chaperonin 3</fullName>
    </alternativeName>
    <alternativeName>
        <fullName evidence="1">Chaperonin-60 3</fullName>
        <shortName evidence="1">Cpn60 3</shortName>
    </alternativeName>
</protein>
<proteinExistence type="inferred from homology"/>